<name>METE_BURMA</name>
<comment type="function">
    <text evidence="1">Catalyzes the transfer of a methyl group from 5-methyltetrahydrofolate to homocysteine resulting in methionine formation.</text>
</comment>
<comment type="catalytic activity">
    <reaction evidence="1">
        <text>5-methyltetrahydropteroyltri-L-glutamate + L-homocysteine = tetrahydropteroyltri-L-glutamate + L-methionine</text>
        <dbReference type="Rhea" id="RHEA:21196"/>
        <dbReference type="ChEBI" id="CHEBI:57844"/>
        <dbReference type="ChEBI" id="CHEBI:58140"/>
        <dbReference type="ChEBI" id="CHEBI:58199"/>
        <dbReference type="ChEBI" id="CHEBI:58207"/>
        <dbReference type="EC" id="2.1.1.14"/>
    </reaction>
</comment>
<comment type="cofactor">
    <cofactor evidence="1">
        <name>Zn(2+)</name>
        <dbReference type="ChEBI" id="CHEBI:29105"/>
    </cofactor>
    <text evidence="1">Binds 1 zinc ion per subunit.</text>
</comment>
<comment type="pathway">
    <text evidence="1">Amino-acid biosynthesis; L-methionine biosynthesis via de novo pathway; L-methionine from L-homocysteine (MetE route): step 1/1.</text>
</comment>
<comment type="similarity">
    <text evidence="1">Belongs to the vitamin-B12 independent methionine synthase family.</text>
</comment>
<dbReference type="EC" id="2.1.1.14" evidence="1"/>
<dbReference type="EMBL" id="CP000010">
    <property type="protein sequence ID" value="AAU49221.1"/>
    <property type="molecule type" value="Genomic_DNA"/>
</dbReference>
<dbReference type="RefSeq" id="WP_004189599.1">
    <property type="nucleotide sequence ID" value="NC_006348.1"/>
</dbReference>
<dbReference type="RefSeq" id="YP_102276.1">
    <property type="nucleotide sequence ID" value="NC_006348.1"/>
</dbReference>
<dbReference type="SMR" id="Q62LZ2"/>
<dbReference type="GeneID" id="92978235"/>
<dbReference type="KEGG" id="bma:BMA0467"/>
<dbReference type="PATRIC" id="fig|243160.12.peg.477"/>
<dbReference type="eggNOG" id="COG0620">
    <property type="taxonomic scope" value="Bacteria"/>
</dbReference>
<dbReference type="HOGENOM" id="CLU_013175_0_0_4"/>
<dbReference type="UniPathway" id="UPA00051">
    <property type="reaction ID" value="UER00082"/>
</dbReference>
<dbReference type="Proteomes" id="UP000006693">
    <property type="component" value="Chromosome 1"/>
</dbReference>
<dbReference type="GO" id="GO:0003871">
    <property type="term" value="F:5-methyltetrahydropteroyltriglutamate-homocysteine S-methyltransferase activity"/>
    <property type="evidence" value="ECO:0007669"/>
    <property type="project" value="UniProtKB-UniRule"/>
</dbReference>
<dbReference type="GO" id="GO:0008270">
    <property type="term" value="F:zinc ion binding"/>
    <property type="evidence" value="ECO:0007669"/>
    <property type="project" value="InterPro"/>
</dbReference>
<dbReference type="GO" id="GO:0009086">
    <property type="term" value="P:methionine biosynthetic process"/>
    <property type="evidence" value="ECO:0007669"/>
    <property type="project" value="UniProtKB-UniRule"/>
</dbReference>
<dbReference type="GO" id="GO:0032259">
    <property type="term" value="P:methylation"/>
    <property type="evidence" value="ECO:0007669"/>
    <property type="project" value="UniProtKB-KW"/>
</dbReference>
<dbReference type="CDD" id="cd03311">
    <property type="entry name" value="CIMS_C_terminal_like"/>
    <property type="match status" value="1"/>
</dbReference>
<dbReference type="CDD" id="cd03312">
    <property type="entry name" value="CIMS_N_terminal_like"/>
    <property type="match status" value="1"/>
</dbReference>
<dbReference type="Gene3D" id="3.20.20.210">
    <property type="match status" value="2"/>
</dbReference>
<dbReference type="HAMAP" id="MF_00172">
    <property type="entry name" value="Meth_synth"/>
    <property type="match status" value="1"/>
</dbReference>
<dbReference type="InterPro" id="IPR013215">
    <property type="entry name" value="Cbl-indep_Met_Synth_N"/>
</dbReference>
<dbReference type="InterPro" id="IPR006276">
    <property type="entry name" value="Cobalamin-indep_Met_synthase"/>
</dbReference>
<dbReference type="InterPro" id="IPR002629">
    <property type="entry name" value="Met_Synth_C/arc"/>
</dbReference>
<dbReference type="InterPro" id="IPR038071">
    <property type="entry name" value="UROD/MetE-like_sf"/>
</dbReference>
<dbReference type="NCBIfam" id="TIGR01371">
    <property type="entry name" value="met_syn_B12ind"/>
    <property type="match status" value="1"/>
</dbReference>
<dbReference type="NCBIfam" id="NF003556">
    <property type="entry name" value="PRK05222.1"/>
    <property type="match status" value="1"/>
</dbReference>
<dbReference type="PANTHER" id="PTHR30519">
    <property type="entry name" value="5-METHYLTETRAHYDROPTEROYLTRIGLUTAMATE--HOMOCYSTEINE METHYLTRANSFERASE"/>
    <property type="match status" value="1"/>
</dbReference>
<dbReference type="Pfam" id="PF08267">
    <property type="entry name" value="Meth_synt_1"/>
    <property type="match status" value="1"/>
</dbReference>
<dbReference type="Pfam" id="PF01717">
    <property type="entry name" value="Meth_synt_2"/>
    <property type="match status" value="1"/>
</dbReference>
<dbReference type="PIRSF" id="PIRSF000382">
    <property type="entry name" value="MeTrfase_B12_ind"/>
    <property type="match status" value="1"/>
</dbReference>
<dbReference type="SUPFAM" id="SSF51726">
    <property type="entry name" value="UROD/MetE-like"/>
    <property type="match status" value="2"/>
</dbReference>
<feature type="chain" id="PRO_1000071602" description="5-methyltetrahydropteroyltriglutamate--homocysteine methyltransferase">
    <location>
        <begin position="1"/>
        <end position="764"/>
    </location>
</feature>
<feature type="active site" description="Proton donor" evidence="1">
    <location>
        <position position="698"/>
    </location>
</feature>
<feature type="binding site" evidence="1">
    <location>
        <begin position="16"/>
        <end position="19"/>
    </location>
    <ligand>
        <name>5-methyltetrahydropteroyltri-L-glutamate</name>
        <dbReference type="ChEBI" id="CHEBI:58207"/>
    </ligand>
</feature>
<feature type="binding site" evidence="1">
    <location>
        <position position="115"/>
    </location>
    <ligand>
        <name>5-methyltetrahydropteroyltri-L-glutamate</name>
        <dbReference type="ChEBI" id="CHEBI:58207"/>
    </ligand>
</feature>
<feature type="binding site" evidence="1">
    <location>
        <begin position="435"/>
        <end position="437"/>
    </location>
    <ligand>
        <name>L-homocysteine</name>
        <dbReference type="ChEBI" id="CHEBI:58199"/>
    </ligand>
</feature>
<feature type="binding site" evidence="1">
    <location>
        <begin position="435"/>
        <end position="437"/>
    </location>
    <ligand>
        <name>L-methionine</name>
        <dbReference type="ChEBI" id="CHEBI:57844"/>
    </ligand>
</feature>
<feature type="binding site" evidence="1">
    <location>
        <position position="488"/>
    </location>
    <ligand>
        <name>L-homocysteine</name>
        <dbReference type="ChEBI" id="CHEBI:58199"/>
    </ligand>
</feature>
<feature type="binding site" evidence="1">
    <location>
        <position position="488"/>
    </location>
    <ligand>
        <name>L-methionine</name>
        <dbReference type="ChEBI" id="CHEBI:57844"/>
    </ligand>
</feature>
<feature type="binding site" evidence="1">
    <location>
        <begin position="519"/>
        <end position="520"/>
    </location>
    <ligand>
        <name>5-methyltetrahydropteroyltri-L-glutamate</name>
        <dbReference type="ChEBI" id="CHEBI:58207"/>
    </ligand>
</feature>
<feature type="binding site" evidence="1">
    <location>
        <position position="565"/>
    </location>
    <ligand>
        <name>5-methyltetrahydropteroyltri-L-glutamate</name>
        <dbReference type="ChEBI" id="CHEBI:58207"/>
    </ligand>
</feature>
<feature type="binding site" evidence="1">
    <location>
        <position position="603"/>
    </location>
    <ligand>
        <name>L-homocysteine</name>
        <dbReference type="ChEBI" id="CHEBI:58199"/>
    </ligand>
</feature>
<feature type="binding site" evidence="1">
    <location>
        <position position="603"/>
    </location>
    <ligand>
        <name>L-methionine</name>
        <dbReference type="ChEBI" id="CHEBI:57844"/>
    </ligand>
</feature>
<feature type="binding site" evidence="1">
    <location>
        <position position="609"/>
    </location>
    <ligand>
        <name>5-methyltetrahydropteroyltri-L-glutamate</name>
        <dbReference type="ChEBI" id="CHEBI:58207"/>
    </ligand>
</feature>
<feature type="binding site" evidence="1">
    <location>
        <position position="645"/>
    </location>
    <ligand>
        <name>Zn(2+)</name>
        <dbReference type="ChEBI" id="CHEBI:29105"/>
        <note>catalytic</note>
    </ligand>
</feature>
<feature type="binding site" evidence="1">
    <location>
        <position position="647"/>
    </location>
    <ligand>
        <name>Zn(2+)</name>
        <dbReference type="ChEBI" id="CHEBI:29105"/>
        <note>catalytic</note>
    </ligand>
</feature>
<feature type="binding site" evidence="1">
    <location>
        <position position="669"/>
    </location>
    <ligand>
        <name>Zn(2+)</name>
        <dbReference type="ChEBI" id="CHEBI:29105"/>
        <note>catalytic</note>
    </ligand>
</feature>
<feature type="binding site" evidence="1">
    <location>
        <position position="730"/>
    </location>
    <ligand>
        <name>Zn(2+)</name>
        <dbReference type="ChEBI" id="CHEBI:29105"/>
        <note>catalytic</note>
    </ligand>
</feature>
<gene>
    <name evidence="1" type="primary">metE</name>
    <name type="ordered locus">BMA0467</name>
</gene>
<proteinExistence type="inferred from homology"/>
<protein>
    <recommendedName>
        <fullName evidence="1">5-methyltetrahydropteroyltriglutamate--homocysteine methyltransferase</fullName>
        <ecNumber evidence="1">2.1.1.14</ecNumber>
    </recommendedName>
    <alternativeName>
        <fullName evidence="1">Cobalamin-independent methionine synthase</fullName>
    </alternativeName>
    <alternativeName>
        <fullName evidence="1">Methionine synthase, vitamin-B12 independent isozyme</fullName>
    </alternativeName>
</protein>
<accession>Q62LZ2</accession>
<reference key="1">
    <citation type="journal article" date="2004" name="Proc. Natl. Acad. Sci. U.S.A.">
        <title>Structural flexibility in the Burkholderia mallei genome.</title>
        <authorList>
            <person name="Nierman W.C."/>
            <person name="DeShazer D."/>
            <person name="Kim H.S."/>
            <person name="Tettelin H."/>
            <person name="Nelson K.E."/>
            <person name="Feldblyum T.V."/>
            <person name="Ulrich R.L."/>
            <person name="Ronning C.M."/>
            <person name="Brinkac L.M."/>
            <person name="Daugherty S.C."/>
            <person name="Davidsen T.D."/>
            <person name="DeBoy R.T."/>
            <person name="Dimitrov G."/>
            <person name="Dodson R.J."/>
            <person name="Durkin A.S."/>
            <person name="Gwinn M.L."/>
            <person name="Haft D.H."/>
            <person name="Khouri H.M."/>
            <person name="Kolonay J.F."/>
            <person name="Madupu R."/>
            <person name="Mohammoud Y."/>
            <person name="Nelson W.C."/>
            <person name="Radune D."/>
            <person name="Romero C.M."/>
            <person name="Sarria S."/>
            <person name="Selengut J."/>
            <person name="Shamblin C."/>
            <person name="Sullivan S.A."/>
            <person name="White O."/>
            <person name="Yu Y."/>
            <person name="Zafar N."/>
            <person name="Zhou L."/>
            <person name="Fraser C.M."/>
        </authorList>
    </citation>
    <scope>NUCLEOTIDE SEQUENCE [LARGE SCALE GENOMIC DNA]</scope>
    <source>
        <strain>ATCC 23344</strain>
    </source>
</reference>
<organism>
    <name type="scientific">Burkholderia mallei (strain ATCC 23344)</name>
    <dbReference type="NCBI Taxonomy" id="243160"/>
    <lineage>
        <taxon>Bacteria</taxon>
        <taxon>Pseudomonadati</taxon>
        <taxon>Pseudomonadota</taxon>
        <taxon>Betaproteobacteria</taxon>
        <taxon>Burkholderiales</taxon>
        <taxon>Burkholderiaceae</taxon>
        <taxon>Burkholderia</taxon>
        <taxon>pseudomallei group</taxon>
    </lineage>
</organism>
<sequence>MTTAHILGFPRIGAQRELKFALERYWRDGASADAERALVDTGRALRAEHWRIERDAGLDCVTVGDFAWYDHVLTTLAHVGGLPRRFGFDARALTLADYFAAARGNAAQPAMEMTKWFDTNYHYLVPEYSPATTFGPGVEWLFDEVREARALGYRAKAALVGPLTLLWLGKARDGLVERLALLPRLVPAYRALLARLREAGVDWVQIDEPIFSLDLPDAWRDAARPTYEALAPGAPKLLVATYFDDASEHAALLKALPVAGLHVDLVRADAQLDAFVADYPADKVLSCGIVDGRNVWRNDLDRSLARLAPVRDALGERLWVATSCSLLHVPVDLAHEPRLDEELKTWLAFAAQKTREVAALRDALVKGRAAVAAEFDDAAVVAAARRTSARIHNPLVKRRVAALTDADARRASAYSVRAAAQRARFGLPLLPTTTIGSFPQTPEIRRARAAFKQGVLDHLGYLEAMREQVRIAIDKQLAYGLDVLVHGEAERNDMVEYFGELLWGFAITSNGWVQSYGSRCVKPPLVYGDVYLPEPMTVGWASYAQSLSAKPVKGMLTGPVTMLQWSFVRDDQPRATTALQIALALRQETLDLEKAGIGMIQIDEPALREGLPLKARERAAYLDWAVRAFGIAASGVADDTQIHTHMCYSEFGDILPSIAALDADVISIETTRSNMELLDAFETFDYPNEIGPGVYDIHSPRVPDADEIERLILLALERIPAQRLWVNPDCGLKTREWRQVDAALAAMVDAAKRVRQKVEEAAPA</sequence>
<keyword id="KW-0028">Amino-acid biosynthesis</keyword>
<keyword id="KW-0479">Metal-binding</keyword>
<keyword id="KW-0486">Methionine biosynthesis</keyword>
<keyword id="KW-0489">Methyltransferase</keyword>
<keyword id="KW-1185">Reference proteome</keyword>
<keyword id="KW-0677">Repeat</keyword>
<keyword id="KW-0808">Transferase</keyword>
<keyword id="KW-0862">Zinc</keyword>
<evidence type="ECO:0000255" key="1">
    <source>
        <dbReference type="HAMAP-Rule" id="MF_00172"/>
    </source>
</evidence>